<name>GSTM2_RAT</name>
<organism>
    <name type="scientific">Rattus norvegicus</name>
    <name type="common">Rat</name>
    <dbReference type="NCBI Taxonomy" id="10116"/>
    <lineage>
        <taxon>Eukaryota</taxon>
        <taxon>Metazoa</taxon>
        <taxon>Chordata</taxon>
        <taxon>Craniata</taxon>
        <taxon>Vertebrata</taxon>
        <taxon>Euteleostomi</taxon>
        <taxon>Mammalia</taxon>
        <taxon>Eutheria</taxon>
        <taxon>Euarchontoglires</taxon>
        <taxon>Glires</taxon>
        <taxon>Rodentia</taxon>
        <taxon>Myomorpha</taxon>
        <taxon>Muroidea</taxon>
        <taxon>Muridae</taxon>
        <taxon>Murinae</taxon>
        <taxon>Rattus</taxon>
    </lineage>
</organism>
<gene>
    <name evidence="11" type="primary">Gstm2</name>
</gene>
<proteinExistence type="evidence at protein level"/>
<keyword id="KW-0002">3D-structure</keyword>
<keyword id="KW-0963">Cytoplasm</keyword>
<keyword id="KW-0903">Direct protein sequencing</keyword>
<keyword id="KW-0443">Lipid metabolism</keyword>
<keyword id="KW-0552">Olfaction</keyword>
<keyword id="KW-0597">Phosphoprotein</keyword>
<keyword id="KW-1185">Reference proteome</keyword>
<keyword id="KW-0716">Sensory transduction</keyword>
<keyword id="KW-0808">Transferase</keyword>
<evidence type="ECO:0000250" key="1"/>
<evidence type="ECO:0000250" key="2">
    <source>
        <dbReference type="UniProtKB" id="P15626"/>
    </source>
</evidence>
<evidence type="ECO:0000250" key="3">
    <source>
        <dbReference type="UniProtKB" id="P28161"/>
    </source>
</evidence>
<evidence type="ECO:0000269" key="4">
    <source>
    </source>
</evidence>
<evidence type="ECO:0000269" key="5">
    <source>
    </source>
</evidence>
<evidence type="ECO:0000269" key="6">
    <source>
    </source>
</evidence>
<evidence type="ECO:0000269" key="7">
    <source>
    </source>
</evidence>
<evidence type="ECO:0000269" key="8">
    <source>
    </source>
</evidence>
<evidence type="ECO:0000305" key="9"/>
<evidence type="ECO:0000305" key="10">
    <source>
    </source>
</evidence>
<evidence type="ECO:0000312" key="11">
    <source>
        <dbReference type="RGD" id="2756"/>
    </source>
</evidence>
<evidence type="ECO:0007744" key="12">
    <source>
    </source>
</evidence>
<evidence type="ECO:0007829" key="13">
    <source>
        <dbReference type="PDB" id="1B4P"/>
    </source>
</evidence>
<reference key="1">
    <citation type="journal article" date="1988" name="J. Biol. Chem.">
        <title>Gene expression of rat glutathione S-transferases. Evidence for gene conversion in the evolution of the Yb multigene family.</title>
        <authorList>
            <person name="Lai H.-C.J."/>
            <person name="Qian B."/>
            <person name="Grove G."/>
            <person name="Tu C.-P.D."/>
        </authorList>
    </citation>
    <scope>NUCLEOTIDE SEQUENCE [GENOMIC DNA]</scope>
</reference>
<reference key="2">
    <citation type="journal article" date="1986" name="Eur. J. Biochem.">
        <title>Cytosolic rat liver glutathione transferase 4-4. Primary structure of the protein reveals extensive differences between homologous glutathione transferases of classes alpha and mu.</title>
        <authorList>
            <person name="Alin P."/>
            <person name="Mannervik B."/>
            <person name="Joernvall H."/>
        </authorList>
    </citation>
    <scope>PROTEIN SEQUENCE OF 2-218</scope>
    <source>
        <strain>Sprague-Dawley</strain>
    </source>
</reference>
<reference key="3">
    <citation type="journal article" date="1986" name="J. Biol. Chem.">
        <title>Rat liver glutathione S-transferases. DNA sequence analysis of a Yb2 cDNA clone and regulation of the Yb1 and Yb2 mRNAs by phenobarbital.</title>
        <authorList>
            <person name="Ding G.J.-F."/>
            <person name="Ding V.D.-H."/>
            <person name="Rodkey J.A."/>
            <person name="Bennett C.D."/>
            <person name="Lu A.Y.H."/>
            <person name="Pickett C.B."/>
        </authorList>
    </citation>
    <scope>NUCLEOTIDE SEQUENCE [MRNA] OF 25-218</scope>
</reference>
<reference key="4">
    <citation type="journal article" date="1986" name="J. Biol. Chem.">
        <title>Rat glutathione S-transferases supergene family. Characterization of an anionic Yb subunit cDNA clone.</title>
        <authorList>
            <person name="Lai H.-C.J."/>
            <person name="Tu C.-P.D."/>
        </authorList>
    </citation>
    <scope>NUCLEOTIDE SEQUENCE [MRNA] OF 33-218</scope>
</reference>
<reference key="5">
    <citation type="journal article" date="1985" name="Proc. Natl. Acad. Sci. U.S.A.">
        <title>Identification of three classes of cytosolic glutathione transferase common to several mammalian species: correlation between structural data and enzymatic properties.</title>
        <authorList>
            <person name="Mannervik B."/>
            <person name="Alin P."/>
            <person name="Guthenberg C."/>
            <person name="Jensson H."/>
            <person name="Tahir M.K."/>
            <person name="Warholm M."/>
            <person name="Joernvall H."/>
        </authorList>
    </citation>
    <scope>PROTEIN SEQUENCE OF 2-26</scope>
</reference>
<reference key="6">
    <citation type="journal article" date="1990" name="Electrophoresis">
        <title>Identification of rat liver glutathione S-transferase Yb subunits by partial N-terminal sequencing after electroblotting of proteins onto a polyvinylidene difluoride membrane from an analytical isoelectric focusing gel.</title>
        <authorList>
            <person name="Chang L.H."/>
            <person name="Hsieh J.C."/>
            <person name="Chen W.L."/>
            <person name="Tam M.F."/>
        </authorList>
    </citation>
    <scope>PROTEIN SEQUENCE OF 2-28</scope>
</reference>
<reference key="7">
    <citation type="journal article" date="1993" name="Biochem. J.">
        <title>Glutathione S-transferases in rat olfactory epithelium: purification, molecular properties and odorant biotransformation.</title>
        <authorList>
            <person name="Ben-Arie N."/>
            <person name="Khen M."/>
            <person name="Lancet D."/>
        </authorList>
    </citation>
    <scope>PROTEIN SEQUENCE OF 2-22</scope>
    <source>
        <strain>Wistar</strain>
        <tissue>Olfactory epithelium</tissue>
    </source>
</reference>
<reference key="8">
    <citation type="submission" date="2007-07" db="UniProtKB">
        <authorList>
            <person name="Lubec G."/>
            <person name="Afjehi-Sadat L."/>
            <person name="Kang S.U."/>
        </authorList>
    </citation>
    <scope>PROTEIN SEQUENCE OF 33-43; 137-144; 153-168 AND 174-182</scope>
    <scope>IDENTIFICATION BY MASS SPECTROMETRY</scope>
    <source>
        <strain>Sprague-Dawley</strain>
        <tissue>Brain</tissue>
        <tissue>Spinal cord</tissue>
    </source>
</reference>
<reference key="9">
    <citation type="journal article" date="2012" name="Nat. Commun.">
        <title>Quantitative maps of protein phosphorylation sites across 14 different rat organs and tissues.</title>
        <authorList>
            <person name="Lundby A."/>
            <person name="Secher A."/>
            <person name="Lage K."/>
            <person name="Nordsborg N.B."/>
            <person name="Dmytriyev A."/>
            <person name="Lundby C."/>
            <person name="Olsen J.V."/>
        </authorList>
    </citation>
    <scope>PHOSPHORYLATION [LARGE SCALE ANALYSIS] AT SER-27 AND SER-44</scope>
    <scope>IDENTIFICATION BY MASS SPECTROMETRY [LARGE SCALE ANALYSIS]</scope>
</reference>
<reference key="10">
    <citation type="journal article" date="1996" name="Biochemistry">
        <title>First-sphere and second-sphere electrostatic effects in the active site of a class mu gluthathione transferase.</title>
        <authorList>
            <person name="Xiao G."/>
            <person name="Liu S."/>
            <person name="Ji X."/>
            <person name="Johnson W.W."/>
            <person name="Chen J."/>
            <person name="Parsons J.F."/>
            <person name="Stevens W.J."/>
            <person name="Gilliland G.L."/>
            <person name="Armstrong R.N."/>
        </authorList>
    </citation>
    <scope>X-RAY CRYSTALLOGRAPHY (1.7 ANGSTROMS) IN COMPLEX WITH GLUTATHIONE ANALOG</scope>
</reference>
<accession>P08010</accession>
<comment type="function">
    <text evidence="3">Conjugation of reduced glutathione to a wide number of exogenous and endogenous hydrophobic electrophiles. Participates in the formation of novel hepoxilin regioisomers.</text>
</comment>
<comment type="catalytic activity">
    <reaction evidence="3">
        <text>RX + glutathione = an S-substituted glutathione + a halide anion + H(+)</text>
        <dbReference type="Rhea" id="RHEA:16437"/>
        <dbReference type="ChEBI" id="CHEBI:15378"/>
        <dbReference type="ChEBI" id="CHEBI:16042"/>
        <dbReference type="ChEBI" id="CHEBI:17792"/>
        <dbReference type="ChEBI" id="CHEBI:57925"/>
        <dbReference type="ChEBI" id="CHEBI:90779"/>
        <dbReference type="EC" id="2.5.1.18"/>
    </reaction>
    <physiologicalReaction direction="left-to-right" evidence="3">
        <dbReference type="Rhea" id="RHEA:16438"/>
    </physiologicalReaction>
</comment>
<comment type="catalytic activity">
    <reaction evidence="3">
        <text>11(S)-hydroxy-14(S),15(S)-epoxy-(5Z,8Z,12E)-eicosatrienoate + glutathione = (11S,15S)-dihydroxy-14(R)-S-glutathionyl-(5Z,8Z,12E)-eicosatrienoate</text>
        <dbReference type="Rhea" id="RHEA:50260"/>
        <dbReference type="ChEBI" id="CHEBI:57925"/>
        <dbReference type="ChEBI" id="CHEBI:132200"/>
        <dbReference type="ChEBI" id="CHEBI:132201"/>
    </reaction>
    <physiologicalReaction direction="left-to-right" evidence="3">
        <dbReference type="Rhea" id="RHEA:50261"/>
    </physiologicalReaction>
</comment>
<comment type="subunit">
    <text evidence="8">Homodimer or heterodimer.</text>
</comment>
<comment type="subcellular location">
    <subcellularLocation>
        <location>Cytoplasm</location>
    </subcellularLocation>
</comment>
<comment type="miscellaneous">
    <text>Yb subclass selectively binds steroid hormones.</text>
</comment>
<comment type="similarity">
    <text evidence="9">Belongs to the GST superfamily. Mu family.</text>
</comment>
<dbReference type="EC" id="2.5.1.18" evidence="3"/>
<dbReference type="EMBL" id="J02592">
    <property type="protein sequence ID" value="AAA41285.1"/>
    <property type="molecule type" value="mRNA"/>
</dbReference>
<dbReference type="EMBL" id="M13590">
    <property type="protein sequence ID" value="AAA42351.1"/>
    <property type="molecule type" value="mRNA"/>
</dbReference>
<dbReference type="EMBL" id="J03914">
    <property type="protein sequence ID" value="AAA41296.1"/>
    <property type="molecule type" value="Genomic_DNA"/>
</dbReference>
<dbReference type="PIR" id="A29231">
    <property type="entry name" value="XURTG4"/>
</dbReference>
<dbReference type="RefSeq" id="NP_803175.1">
    <property type="nucleotide sequence ID" value="NM_177426.2"/>
</dbReference>
<dbReference type="PDB" id="1B4P">
    <property type="method" value="X-ray"/>
    <property type="resolution" value="1.70 A"/>
    <property type="chains" value="A=2-218"/>
</dbReference>
<dbReference type="PDBsum" id="1B4P"/>
<dbReference type="SMR" id="P08010"/>
<dbReference type="BioGRID" id="246589">
    <property type="interactions" value="1"/>
</dbReference>
<dbReference type="FunCoup" id="P08010">
    <property type="interactions" value="165"/>
</dbReference>
<dbReference type="IntAct" id="P08010">
    <property type="interactions" value="2"/>
</dbReference>
<dbReference type="ChEMBL" id="CHEMBL2504"/>
<dbReference type="iPTMnet" id="P08010"/>
<dbReference type="PhosphoSitePlus" id="P08010"/>
<dbReference type="jPOST" id="P08010"/>
<dbReference type="PaxDb" id="10116-ENSRNOP00000025939"/>
<dbReference type="GeneID" id="24424"/>
<dbReference type="KEGG" id="rno:24424"/>
<dbReference type="UCSC" id="RGD:2756">
    <property type="organism name" value="rat"/>
</dbReference>
<dbReference type="AGR" id="RGD:2756"/>
<dbReference type="CTD" id="2946"/>
<dbReference type="RGD" id="2756">
    <property type="gene designation" value="Gstm2"/>
</dbReference>
<dbReference type="VEuPathDB" id="HostDB:ENSRNOG00000060939"/>
<dbReference type="eggNOG" id="KOG1695">
    <property type="taxonomic scope" value="Eukaryota"/>
</dbReference>
<dbReference type="InParanoid" id="P08010"/>
<dbReference type="OrthoDB" id="4951845at2759"/>
<dbReference type="PhylomeDB" id="P08010"/>
<dbReference type="TreeFam" id="TF353040"/>
<dbReference type="BRENDA" id="2.5.1.18">
    <property type="organism ID" value="5301"/>
</dbReference>
<dbReference type="Reactome" id="R-RNO-156590">
    <property type="pathway name" value="Glutathione conjugation"/>
</dbReference>
<dbReference type="Reactome" id="R-RNO-9748787">
    <property type="pathway name" value="Azathioprine ADME"/>
</dbReference>
<dbReference type="Reactome" id="R-RNO-9753281">
    <property type="pathway name" value="Paracetamol ADME"/>
</dbReference>
<dbReference type="EvolutionaryTrace" id="P08010"/>
<dbReference type="PRO" id="PR:P08010"/>
<dbReference type="Proteomes" id="UP000002494">
    <property type="component" value="Chromosome 2"/>
</dbReference>
<dbReference type="Bgee" id="ENSRNOG00000018937">
    <property type="expression patterns" value="Expressed in liver and 20 other cell types or tissues"/>
</dbReference>
<dbReference type="ExpressionAtlas" id="P08010">
    <property type="expression patterns" value="baseline and differential"/>
</dbReference>
<dbReference type="GO" id="GO:0005737">
    <property type="term" value="C:cytoplasm"/>
    <property type="evidence" value="ECO:0000266"/>
    <property type="project" value="RGD"/>
</dbReference>
<dbReference type="GO" id="GO:0005829">
    <property type="term" value="C:cytosol"/>
    <property type="evidence" value="ECO:0000314"/>
    <property type="project" value="CAFA"/>
</dbReference>
<dbReference type="GO" id="GO:0005739">
    <property type="term" value="C:mitochondrion"/>
    <property type="evidence" value="ECO:0000266"/>
    <property type="project" value="RGD"/>
</dbReference>
<dbReference type="GO" id="GO:0032991">
    <property type="term" value="C:protein-containing complex"/>
    <property type="evidence" value="ECO:0000314"/>
    <property type="project" value="RGD"/>
</dbReference>
<dbReference type="GO" id="GO:0016529">
    <property type="term" value="C:sarcoplasmic reticulum"/>
    <property type="evidence" value="ECO:0000266"/>
    <property type="project" value="RGD"/>
</dbReference>
<dbReference type="GO" id="GO:0019899">
    <property type="term" value="F:enzyme binding"/>
    <property type="evidence" value="ECO:0000266"/>
    <property type="project" value="RGD"/>
</dbReference>
<dbReference type="GO" id="GO:0005504">
    <property type="term" value="F:fatty acid binding"/>
    <property type="evidence" value="ECO:0000266"/>
    <property type="project" value="RGD"/>
</dbReference>
<dbReference type="GO" id="GO:0043295">
    <property type="term" value="F:glutathione binding"/>
    <property type="evidence" value="ECO:0000314"/>
    <property type="project" value="CAFA"/>
</dbReference>
<dbReference type="GO" id="GO:0004602">
    <property type="term" value="F:glutathione peroxidase activity"/>
    <property type="evidence" value="ECO:0000266"/>
    <property type="project" value="RGD"/>
</dbReference>
<dbReference type="GO" id="GO:0004364">
    <property type="term" value="F:glutathione transferase activity"/>
    <property type="evidence" value="ECO:0000314"/>
    <property type="project" value="CAFA"/>
</dbReference>
<dbReference type="GO" id="GO:0042802">
    <property type="term" value="F:identical protein binding"/>
    <property type="evidence" value="ECO:0000353"/>
    <property type="project" value="RGD"/>
</dbReference>
<dbReference type="GO" id="GO:0042803">
    <property type="term" value="F:protein homodimerization activity"/>
    <property type="evidence" value="ECO:0000266"/>
    <property type="project" value="RGD"/>
</dbReference>
<dbReference type="GO" id="GO:0005102">
    <property type="term" value="F:signaling receptor binding"/>
    <property type="evidence" value="ECO:0000266"/>
    <property type="project" value="RGD"/>
</dbReference>
<dbReference type="GO" id="GO:0070458">
    <property type="term" value="P:cellular detoxification of nitrogen compound"/>
    <property type="evidence" value="ECO:0000266"/>
    <property type="project" value="RGD"/>
</dbReference>
<dbReference type="GO" id="GO:0071313">
    <property type="term" value="P:cellular response to caffeine"/>
    <property type="evidence" value="ECO:0000266"/>
    <property type="project" value="RGD"/>
</dbReference>
<dbReference type="GO" id="GO:0006749">
    <property type="term" value="P:glutathione metabolic process"/>
    <property type="evidence" value="ECO:0000315"/>
    <property type="project" value="RGD"/>
</dbReference>
<dbReference type="GO" id="GO:0051122">
    <property type="term" value="P:hepoxilin biosynthetic process"/>
    <property type="evidence" value="ECO:0000250"/>
    <property type="project" value="UniProtKB"/>
</dbReference>
<dbReference type="GO" id="GO:0043651">
    <property type="term" value="P:linoleic acid metabolic process"/>
    <property type="evidence" value="ECO:0000266"/>
    <property type="project" value="RGD"/>
</dbReference>
<dbReference type="GO" id="GO:0018916">
    <property type="term" value="P:nitrobenzene metabolic process"/>
    <property type="evidence" value="ECO:0000266"/>
    <property type="project" value="RGD"/>
</dbReference>
<dbReference type="GO" id="GO:0010880">
    <property type="term" value="P:regulation of release of sequestered calcium ion into cytosol by sarcoplasmic reticulum"/>
    <property type="evidence" value="ECO:0000266"/>
    <property type="project" value="RGD"/>
</dbReference>
<dbReference type="GO" id="GO:1902168">
    <property type="term" value="P:response to catechin"/>
    <property type="evidence" value="ECO:0000270"/>
    <property type="project" value="RGD"/>
</dbReference>
<dbReference type="GO" id="GO:0033595">
    <property type="term" value="P:response to genistein"/>
    <property type="evidence" value="ECO:0000270"/>
    <property type="project" value="RGD"/>
</dbReference>
<dbReference type="GO" id="GO:0010038">
    <property type="term" value="P:response to metal ion"/>
    <property type="evidence" value="ECO:0000270"/>
    <property type="project" value="RGD"/>
</dbReference>
<dbReference type="GO" id="GO:0007608">
    <property type="term" value="P:sensory perception of smell"/>
    <property type="evidence" value="ECO:0007669"/>
    <property type="project" value="UniProtKB-KW"/>
</dbReference>
<dbReference type="GO" id="GO:0042178">
    <property type="term" value="P:xenobiotic catabolic process"/>
    <property type="evidence" value="ECO:0000314"/>
    <property type="project" value="CAFA"/>
</dbReference>
<dbReference type="GO" id="GO:0006805">
    <property type="term" value="P:xenobiotic metabolic process"/>
    <property type="evidence" value="ECO:0000304"/>
    <property type="project" value="RGD"/>
</dbReference>
<dbReference type="CDD" id="cd03209">
    <property type="entry name" value="GST_C_Mu"/>
    <property type="match status" value="1"/>
</dbReference>
<dbReference type="CDD" id="cd03075">
    <property type="entry name" value="GST_N_Mu"/>
    <property type="match status" value="1"/>
</dbReference>
<dbReference type="FunFam" id="1.20.1050.10:FF:000083">
    <property type="entry name" value="Glutathione S-transferase Mu 1"/>
    <property type="match status" value="1"/>
</dbReference>
<dbReference type="FunFam" id="3.40.30.10:FF:000603">
    <property type="entry name" value="Glutathione S-transferase Mu 1"/>
    <property type="match status" value="1"/>
</dbReference>
<dbReference type="Gene3D" id="1.20.1050.10">
    <property type="match status" value="1"/>
</dbReference>
<dbReference type="Gene3D" id="3.40.30.10">
    <property type="entry name" value="Glutaredoxin"/>
    <property type="match status" value="1"/>
</dbReference>
<dbReference type="InterPro" id="IPR010987">
    <property type="entry name" value="Glutathione-S-Trfase_C-like"/>
</dbReference>
<dbReference type="InterPro" id="IPR036282">
    <property type="entry name" value="Glutathione-S-Trfase_C_sf"/>
</dbReference>
<dbReference type="InterPro" id="IPR040079">
    <property type="entry name" value="Glutathione_S-Trfase"/>
</dbReference>
<dbReference type="InterPro" id="IPR004045">
    <property type="entry name" value="Glutathione_S-Trfase_N"/>
</dbReference>
<dbReference type="InterPro" id="IPR004046">
    <property type="entry name" value="GST_C"/>
</dbReference>
<dbReference type="InterPro" id="IPR003081">
    <property type="entry name" value="GST_mu"/>
</dbReference>
<dbReference type="InterPro" id="IPR050213">
    <property type="entry name" value="GST_superfamily"/>
</dbReference>
<dbReference type="InterPro" id="IPR036249">
    <property type="entry name" value="Thioredoxin-like_sf"/>
</dbReference>
<dbReference type="PANTHER" id="PTHR11571">
    <property type="entry name" value="GLUTATHIONE S-TRANSFERASE"/>
    <property type="match status" value="1"/>
</dbReference>
<dbReference type="PANTHER" id="PTHR11571:SF271">
    <property type="entry name" value="GLUTATHIONE S-TRANSFERASE MU 2"/>
    <property type="match status" value="1"/>
</dbReference>
<dbReference type="Pfam" id="PF00043">
    <property type="entry name" value="GST_C"/>
    <property type="match status" value="1"/>
</dbReference>
<dbReference type="Pfam" id="PF02798">
    <property type="entry name" value="GST_N"/>
    <property type="match status" value="1"/>
</dbReference>
<dbReference type="PRINTS" id="PR01267">
    <property type="entry name" value="GSTRNSFRASEM"/>
</dbReference>
<dbReference type="SFLD" id="SFLDG01205">
    <property type="entry name" value="AMPS.1"/>
    <property type="match status" value="1"/>
</dbReference>
<dbReference type="SFLD" id="SFLDS00019">
    <property type="entry name" value="Glutathione_Transferase_(cytos"/>
    <property type="match status" value="1"/>
</dbReference>
<dbReference type="SUPFAM" id="SSF47616">
    <property type="entry name" value="GST C-terminal domain-like"/>
    <property type="match status" value="1"/>
</dbReference>
<dbReference type="SUPFAM" id="SSF52833">
    <property type="entry name" value="Thioredoxin-like"/>
    <property type="match status" value="1"/>
</dbReference>
<dbReference type="PROSITE" id="PS50405">
    <property type="entry name" value="GST_CTER"/>
    <property type="match status" value="1"/>
</dbReference>
<dbReference type="PROSITE" id="PS50404">
    <property type="entry name" value="GST_NTER"/>
    <property type="match status" value="1"/>
</dbReference>
<feature type="initiator methionine" description="Removed" evidence="4 5 6 7">
    <location>
        <position position="1"/>
    </location>
</feature>
<feature type="chain" id="PRO_0000185832" description="Glutathione S-transferase Mu 2">
    <location>
        <begin position="2"/>
        <end position="218"/>
    </location>
</feature>
<feature type="domain" description="GST N-terminal">
    <location>
        <begin position="2"/>
        <end position="88"/>
    </location>
</feature>
<feature type="domain" description="GST C-terminal">
    <location>
        <begin position="90"/>
        <end position="214"/>
    </location>
</feature>
<feature type="binding site" evidence="10">
    <location>
        <begin position="7"/>
        <end position="8"/>
    </location>
    <ligand>
        <name>glutathione</name>
        <dbReference type="ChEBI" id="CHEBI:57925"/>
    </ligand>
</feature>
<feature type="binding site" evidence="10">
    <location>
        <begin position="43"/>
        <end position="46"/>
    </location>
    <ligand>
        <name>glutathione</name>
        <dbReference type="ChEBI" id="CHEBI:57925"/>
    </ligand>
</feature>
<feature type="binding site" evidence="10">
    <location>
        <position position="50"/>
    </location>
    <ligand>
        <name>glutathione</name>
        <dbReference type="ChEBI" id="CHEBI:57925"/>
    </ligand>
</feature>
<feature type="binding site" evidence="10">
    <location>
        <begin position="59"/>
        <end position="60"/>
    </location>
    <ligand>
        <name>glutathione</name>
        <dbReference type="ChEBI" id="CHEBI:57925"/>
    </ligand>
</feature>
<feature type="binding site" evidence="10">
    <location>
        <begin position="72"/>
        <end position="73"/>
    </location>
    <ligand>
        <name>glutathione</name>
        <dbReference type="ChEBI" id="CHEBI:57925"/>
    </ligand>
</feature>
<feature type="binding site" evidence="1">
    <location>
        <position position="116"/>
    </location>
    <ligand>
        <name>substrate</name>
    </ligand>
</feature>
<feature type="modified residue" description="Phosphoserine" evidence="12">
    <location>
        <position position="27"/>
    </location>
</feature>
<feature type="modified residue" description="Phosphoserine" evidence="12">
    <location>
        <position position="44"/>
    </location>
</feature>
<feature type="modified residue" description="Phosphoserine" evidence="2">
    <location>
        <position position="117"/>
    </location>
</feature>
<feature type="sequence conflict" description="In Ref. 2; AA sequence." evidence="9" ref="2">
    <original>W</original>
    <variation>S</variation>
    <location>
        <position position="147"/>
    </location>
</feature>
<feature type="strand" evidence="13">
    <location>
        <begin position="3"/>
        <end position="10"/>
    </location>
</feature>
<feature type="turn" evidence="13">
    <location>
        <begin position="12"/>
        <end position="14"/>
    </location>
</feature>
<feature type="helix" evidence="13">
    <location>
        <begin position="15"/>
        <end position="23"/>
    </location>
</feature>
<feature type="strand" evidence="13">
    <location>
        <begin position="28"/>
        <end position="33"/>
    </location>
</feature>
<feature type="turn" evidence="13">
    <location>
        <begin position="38"/>
        <end position="40"/>
    </location>
</feature>
<feature type="helix" evidence="13">
    <location>
        <begin position="44"/>
        <end position="50"/>
    </location>
</feature>
<feature type="strand" evidence="13">
    <location>
        <begin position="60"/>
        <end position="65"/>
    </location>
</feature>
<feature type="strand" evidence="13">
    <location>
        <begin position="68"/>
        <end position="72"/>
    </location>
</feature>
<feature type="helix" evidence="13">
    <location>
        <begin position="73"/>
        <end position="83"/>
    </location>
</feature>
<feature type="helix" evidence="13">
    <location>
        <begin position="91"/>
        <end position="116"/>
    </location>
</feature>
<feature type="helix" evidence="13">
    <location>
        <begin position="120"/>
        <end position="142"/>
    </location>
</feature>
<feature type="strand" evidence="13">
    <location>
        <begin position="150"/>
        <end position="152"/>
    </location>
</feature>
<feature type="helix" evidence="13">
    <location>
        <begin position="155"/>
        <end position="170"/>
    </location>
</feature>
<feature type="turn" evidence="13">
    <location>
        <begin position="172"/>
        <end position="177"/>
    </location>
</feature>
<feature type="helix" evidence="13">
    <location>
        <begin position="179"/>
        <end position="189"/>
    </location>
</feature>
<feature type="helix" evidence="13">
    <location>
        <begin position="192"/>
        <end position="198"/>
    </location>
</feature>
<feature type="strand" evidence="13">
    <location>
        <begin position="214"/>
        <end position="216"/>
    </location>
</feature>
<protein>
    <recommendedName>
        <fullName evidence="9">Glutathione S-transferase Mu 2</fullName>
        <ecNumber evidence="3">2.5.1.18</ecNumber>
    </recommendedName>
    <alternativeName>
        <fullName>GST 4-4</fullName>
    </alternativeName>
    <alternativeName>
        <fullName>GSTM2-2</fullName>
    </alternativeName>
    <alternativeName>
        <fullName>Glutathione S-transferase Yb-2</fullName>
        <shortName>GST Yb2</shortName>
    </alternativeName>
</protein>
<sequence>MPMTLGYWDIRGLAHAIRLFLEYTDTSYEDKKYSMGDAPDYDRSQWLSEKFKLGLDFPNLPYLIDGSHKITQSNAILRYLGRKHNLCGETEEERIRVDVLENQAMDTRLQLAMVCYSPDFERKKPEYLEGLPEKMKLYSEFLGKQPWFAGNKITYVDFLVYDVLDQHRIFEPKCLDAFPNLKDFVARFEGLKKISDYMKSGRFLSKPIFAKMAFWNPK</sequence>